<keyword id="KW-0150">Chloroplast</keyword>
<keyword id="KW-0472">Membrane</keyword>
<keyword id="KW-0602">Photosynthesis</keyword>
<keyword id="KW-0604">Photosystem II</keyword>
<keyword id="KW-0934">Plastid</keyword>
<keyword id="KW-0674">Reaction center</keyword>
<keyword id="KW-0793">Thylakoid</keyword>
<keyword id="KW-0812">Transmembrane</keyword>
<keyword id="KW-1133">Transmembrane helix</keyword>
<feature type="chain" id="PRO_0000216589" description="Photosystem II reaction center protein J">
    <location>
        <begin position="1"/>
        <end position="42"/>
    </location>
</feature>
<feature type="transmembrane region" description="Helical" evidence="1">
    <location>
        <begin position="10"/>
        <end position="30"/>
    </location>
</feature>
<evidence type="ECO:0000255" key="1">
    <source>
        <dbReference type="HAMAP-Rule" id="MF_01305"/>
    </source>
</evidence>
<evidence type="ECO:0000305" key="2"/>
<name>PSBJ_EUGGR</name>
<organism>
    <name type="scientific">Euglena gracilis</name>
    <dbReference type="NCBI Taxonomy" id="3039"/>
    <lineage>
        <taxon>Eukaryota</taxon>
        <taxon>Discoba</taxon>
        <taxon>Euglenozoa</taxon>
        <taxon>Euglenida</taxon>
        <taxon>Spirocuta</taxon>
        <taxon>Euglenophyceae</taxon>
        <taxon>Euglenales</taxon>
        <taxon>Euglenaceae</taxon>
        <taxon>Euglena</taxon>
    </lineage>
</organism>
<sequence length="42" mass="4431">MSNSENTGRIPLWLVLTIIGLAAIALLALFFYGSYSGLGSSL</sequence>
<geneLocation type="chloroplast"/>
<dbReference type="EMBL" id="Z11874">
    <property type="protein sequence ID" value="CAA77915.1"/>
    <property type="molecule type" value="Genomic_DNA"/>
</dbReference>
<dbReference type="EMBL" id="X07073">
    <property type="protein sequence ID" value="CAA30111.1"/>
    <property type="molecule type" value="Genomic_DNA"/>
</dbReference>
<dbReference type="EMBL" id="X70810">
    <property type="protein sequence ID" value="CAA50098.1"/>
    <property type="molecule type" value="Genomic_DNA"/>
</dbReference>
<dbReference type="EMBL" id="M37463">
    <property type="protein sequence ID" value="AAA84222.1"/>
    <property type="molecule type" value="Genomic_DNA"/>
</dbReference>
<dbReference type="PIR" id="S00692">
    <property type="entry name" value="S00692"/>
</dbReference>
<dbReference type="RefSeq" id="NP_041911.1">
    <property type="nucleotide sequence ID" value="NC_001603.2"/>
</dbReference>
<dbReference type="SMR" id="P12229"/>
<dbReference type="GeneID" id="807521"/>
<dbReference type="GO" id="GO:0009535">
    <property type="term" value="C:chloroplast thylakoid membrane"/>
    <property type="evidence" value="ECO:0007669"/>
    <property type="project" value="UniProtKB-SubCell"/>
</dbReference>
<dbReference type="GO" id="GO:0009539">
    <property type="term" value="C:photosystem II reaction center"/>
    <property type="evidence" value="ECO:0007669"/>
    <property type="project" value="InterPro"/>
</dbReference>
<dbReference type="GO" id="GO:0015979">
    <property type="term" value="P:photosynthesis"/>
    <property type="evidence" value="ECO:0007669"/>
    <property type="project" value="UniProtKB-UniRule"/>
</dbReference>
<dbReference type="Gene3D" id="6.10.250.2070">
    <property type="match status" value="1"/>
</dbReference>
<dbReference type="HAMAP" id="MF_01305">
    <property type="entry name" value="PSII_PsbJ"/>
    <property type="match status" value="1"/>
</dbReference>
<dbReference type="InterPro" id="IPR002682">
    <property type="entry name" value="PSII_PsbJ"/>
</dbReference>
<dbReference type="InterPro" id="IPR037267">
    <property type="entry name" value="PSII_PsbJ_sf"/>
</dbReference>
<dbReference type="NCBIfam" id="NF002722">
    <property type="entry name" value="PRK02565.1"/>
    <property type="match status" value="1"/>
</dbReference>
<dbReference type="PANTHER" id="PTHR34812">
    <property type="entry name" value="PHOTOSYSTEM II REACTION CENTER PROTEIN J"/>
    <property type="match status" value="1"/>
</dbReference>
<dbReference type="PANTHER" id="PTHR34812:SF3">
    <property type="entry name" value="PHOTOSYSTEM II REACTION CENTER PROTEIN J"/>
    <property type="match status" value="1"/>
</dbReference>
<dbReference type="Pfam" id="PF01788">
    <property type="entry name" value="PsbJ"/>
    <property type="match status" value="1"/>
</dbReference>
<dbReference type="SUPFAM" id="SSF161021">
    <property type="entry name" value="Photosystem II reaction center protein J, PsbJ"/>
    <property type="match status" value="1"/>
</dbReference>
<proteinExistence type="inferred from homology"/>
<protein>
    <recommendedName>
        <fullName evidence="1">Photosystem II reaction center protein J</fullName>
        <shortName evidence="1">PSII-J</shortName>
    </recommendedName>
</protein>
<comment type="function">
    <text>This protein is a component of the reaction center of photosystem II.</text>
</comment>
<comment type="function">
    <text evidence="1">One of the components of the core complex of photosystem II (PSII). PSII is a light-driven water:plastoquinone oxidoreductase that uses light energy to abstract electrons from H(2)O, generating O(2) and a proton gradient subsequently used for ATP formation. It consists of a core antenna complex that captures photons, and an electron transfer chain that converts photonic excitation into a charge separation.</text>
</comment>
<comment type="subunit">
    <text evidence="2">PSII is composed of 1 copy each of membrane proteins PsbA, PsbB, PsbC, PsbD, PsbE, PsbF, PsbH, PsbI, PsbJ, PsbK, PsbL, PsbM, PsbT, PsbY, PsbZ, Psb30/Ycf12, at least 3 peripheral proteins of the oxygen-evolving complex and a large number of cofactors. It forms dimeric complexes.</text>
</comment>
<comment type="subcellular location">
    <subcellularLocation>
        <location evidence="1">Plastid</location>
        <location evidence="1">Chloroplast thylakoid membrane</location>
        <topology evidence="1">Single-pass membrane protein</topology>
    </subcellularLocation>
</comment>
<comment type="similarity">
    <text evidence="1">Belongs to the PsbJ family.</text>
</comment>
<accession>P12229</accession>
<reference key="1">
    <citation type="journal article" date="1988" name="Curr. Genet.">
        <title>Organization of the psbE, psbF, orf38, and orf42 gene loci on the Euglena gracilis chloroplast genome.</title>
        <authorList>
            <person name="Cushman J.C."/>
            <person name="Christopher D.A."/>
            <person name="Little M.C."/>
            <person name="Hallick R.B."/>
            <person name="Price C.A."/>
        </authorList>
    </citation>
    <scope>NUCLEOTIDE SEQUENCE [GENOMIC DNA]</scope>
    <source>
        <strain>Z / UTEX 753</strain>
    </source>
</reference>
<reference key="2">
    <citation type="journal article" date="1993" name="Nucleic Acids Res.">
        <title>Complete sequence of Euglena gracilis chloroplast DNA.</title>
        <authorList>
            <person name="Hallick R.B."/>
            <person name="Hong L."/>
            <person name="Drager R.G."/>
            <person name="Favreau M.R."/>
            <person name="Monfort A."/>
            <person name="Orsat B."/>
            <person name="Spielmann A."/>
            <person name="Stutz E."/>
        </authorList>
    </citation>
    <scope>NUCLEOTIDE SEQUENCE [LARGE SCALE GENOMIC DNA]</scope>
    <source>
        <strain>Z / UTEX 753</strain>
    </source>
</reference>
<reference key="3">
    <citation type="journal article" date="1988" name="Curr. Genet.">
        <title>Organization of ribosomal protein genes rpl23, rpl2, rps19, rpl22 and rps3 on the Euglena gracilis chloroplast genome.</title>
        <authorList>
            <person name="Christopher D.A."/>
            <person name="Cushman J.C."/>
            <person name="Price C.A."/>
            <person name="Hallick R.B."/>
        </authorList>
    </citation>
    <scope>NUCLEOTIDE SEQUENCE [GENOMIC DNA] OF 10-42</scope>
    <source>
        <strain>Z / UTEX 753</strain>
    </source>
</reference>
<gene>
    <name evidence="1" type="primary">psbJ</name>
</gene>